<evidence type="ECO:0000255" key="1">
    <source>
        <dbReference type="HAMAP-Rule" id="MF_03179"/>
    </source>
</evidence>
<evidence type="ECO:0000269" key="2">
    <source>
    </source>
</evidence>
<reference key="1">
    <citation type="journal article" date="2002" name="Nature">
        <title>The genome sequence of Schizosaccharomyces pombe.</title>
        <authorList>
            <person name="Wood V."/>
            <person name="Gwilliam R."/>
            <person name="Rajandream M.A."/>
            <person name="Lyne M.H."/>
            <person name="Lyne R."/>
            <person name="Stewart A."/>
            <person name="Sgouros J.G."/>
            <person name="Peat N."/>
            <person name="Hayles J."/>
            <person name="Baker S.G."/>
            <person name="Basham D."/>
            <person name="Bowman S."/>
            <person name="Brooks K."/>
            <person name="Brown D."/>
            <person name="Brown S."/>
            <person name="Chillingworth T."/>
            <person name="Churcher C.M."/>
            <person name="Collins M."/>
            <person name="Connor R."/>
            <person name="Cronin A."/>
            <person name="Davis P."/>
            <person name="Feltwell T."/>
            <person name="Fraser A."/>
            <person name="Gentles S."/>
            <person name="Goble A."/>
            <person name="Hamlin N."/>
            <person name="Harris D.E."/>
            <person name="Hidalgo J."/>
            <person name="Hodgson G."/>
            <person name="Holroyd S."/>
            <person name="Hornsby T."/>
            <person name="Howarth S."/>
            <person name="Huckle E.J."/>
            <person name="Hunt S."/>
            <person name="Jagels K."/>
            <person name="James K.D."/>
            <person name="Jones L."/>
            <person name="Jones M."/>
            <person name="Leather S."/>
            <person name="McDonald S."/>
            <person name="McLean J."/>
            <person name="Mooney P."/>
            <person name="Moule S."/>
            <person name="Mungall K.L."/>
            <person name="Murphy L.D."/>
            <person name="Niblett D."/>
            <person name="Odell C."/>
            <person name="Oliver K."/>
            <person name="O'Neil S."/>
            <person name="Pearson D."/>
            <person name="Quail M.A."/>
            <person name="Rabbinowitsch E."/>
            <person name="Rutherford K.M."/>
            <person name="Rutter S."/>
            <person name="Saunders D."/>
            <person name="Seeger K."/>
            <person name="Sharp S."/>
            <person name="Skelton J."/>
            <person name="Simmonds M.N."/>
            <person name="Squares R."/>
            <person name="Squares S."/>
            <person name="Stevens K."/>
            <person name="Taylor K."/>
            <person name="Taylor R.G."/>
            <person name="Tivey A."/>
            <person name="Walsh S.V."/>
            <person name="Warren T."/>
            <person name="Whitehead S."/>
            <person name="Woodward J.R."/>
            <person name="Volckaert G."/>
            <person name="Aert R."/>
            <person name="Robben J."/>
            <person name="Grymonprez B."/>
            <person name="Weltjens I."/>
            <person name="Vanstreels E."/>
            <person name="Rieger M."/>
            <person name="Schaefer M."/>
            <person name="Mueller-Auer S."/>
            <person name="Gabel C."/>
            <person name="Fuchs M."/>
            <person name="Duesterhoeft A."/>
            <person name="Fritzc C."/>
            <person name="Holzer E."/>
            <person name="Moestl D."/>
            <person name="Hilbert H."/>
            <person name="Borzym K."/>
            <person name="Langer I."/>
            <person name="Beck A."/>
            <person name="Lehrach H."/>
            <person name="Reinhardt R."/>
            <person name="Pohl T.M."/>
            <person name="Eger P."/>
            <person name="Zimmermann W."/>
            <person name="Wedler H."/>
            <person name="Wambutt R."/>
            <person name="Purnelle B."/>
            <person name="Goffeau A."/>
            <person name="Cadieu E."/>
            <person name="Dreano S."/>
            <person name="Gloux S."/>
            <person name="Lelaure V."/>
            <person name="Mottier S."/>
            <person name="Galibert F."/>
            <person name="Aves S.J."/>
            <person name="Xiang Z."/>
            <person name="Hunt C."/>
            <person name="Moore K."/>
            <person name="Hurst S.M."/>
            <person name="Lucas M."/>
            <person name="Rochet M."/>
            <person name="Gaillardin C."/>
            <person name="Tallada V.A."/>
            <person name="Garzon A."/>
            <person name="Thode G."/>
            <person name="Daga R.R."/>
            <person name="Cruzado L."/>
            <person name="Jimenez J."/>
            <person name="Sanchez M."/>
            <person name="del Rey F."/>
            <person name="Benito J."/>
            <person name="Dominguez A."/>
            <person name="Revuelta J.L."/>
            <person name="Moreno S."/>
            <person name="Armstrong J."/>
            <person name="Forsburg S.L."/>
            <person name="Cerutti L."/>
            <person name="Lowe T."/>
            <person name="McCombie W.R."/>
            <person name="Paulsen I."/>
            <person name="Potashkin J."/>
            <person name="Shpakovski G.V."/>
            <person name="Ussery D."/>
            <person name="Barrell B.G."/>
            <person name="Nurse P."/>
        </authorList>
    </citation>
    <scope>NUCLEOTIDE SEQUENCE [LARGE SCALE GENOMIC DNA]</scope>
    <source>
        <strain>972 / ATCC 24843</strain>
    </source>
</reference>
<reference key="2">
    <citation type="journal article" date="2000" name="Mol. Microbiol.">
        <title>Identification of proteases with shared functions to the proprotein processing protease Krp1 in the fission yeast Schizosaccharomyces pombe.</title>
        <authorList>
            <person name="Ladds G."/>
            <person name="Davey J."/>
        </authorList>
    </citation>
    <scope>GENE NAME</scope>
</reference>
<reference key="3">
    <citation type="journal article" date="2006" name="Nat. Biotechnol.">
        <title>ORFeome cloning and global analysis of protein localization in the fission yeast Schizosaccharomyces pombe.</title>
        <authorList>
            <person name="Matsuyama A."/>
            <person name="Arai R."/>
            <person name="Yashiroda Y."/>
            <person name="Shirai A."/>
            <person name="Kamata A."/>
            <person name="Sekido S."/>
            <person name="Kobayashi Y."/>
            <person name="Hashimoto A."/>
            <person name="Hamamoto M."/>
            <person name="Hiraoka Y."/>
            <person name="Horinouchi S."/>
            <person name="Yoshida M."/>
        </authorList>
    </citation>
    <scope>SUBCELLULAR LOCATION [LARGE SCALE ANALYSIS]</scope>
</reference>
<comment type="function">
    <text evidence="1">Required for the formation of a threonylcarbamoyl group on adenosine at position 37 (t(6)A37) in mitochondrial tRNAs that read codons beginning with adenine. Probably involved in the transfer of the threonylcarbamoyl moiety of threonylcarbamoyl-AMP (TC-AMP) to the N6 group of A37. Involved in mitochondrial genome maintenance.</text>
</comment>
<comment type="catalytic activity">
    <reaction evidence="1">
        <text>L-threonylcarbamoyladenylate + adenosine(37) in tRNA = N(6)-L-threonylcarbamoyladenosine(37) in tRNA + AMP + H(+)</text>
        <dbReference type="Rhea" id="RHEA:37059"/>
        <dbReference type="Rhea" id="RHEA-COMP:10162"/>
        <dbReference type="Rhea" id="RHEA-COMP:10163"/>
        <dbReference type="ChEBI" id="CHEBI:15378"/>
        <dbReference type="ChEBI" id="CHEBI:73682"/>
        <dbReference type="ChEBI" id="CHEBI:74411"/>
        <dbReference type="ChEBI" id="CHEBI:74418"/>
        <dbReference type="ChEBI" id="CHEBI:456215"/>
        <dbReference type="EC" id="2.3.1.234"/>
    </reaction>
</comment>
<comment type="cofactor">
    <cofactor evidence="1">
        <name>a divalent metal cation</name>
        <dbReference type="ChEBI" id="CHEBI:60240"/>
    </cofactor>
    <text evidence="1">Binds 1 divalent metal cation per subunit.</text>
</comment>
<comment type="subunit">
    <text evidence="1">Homodimer.</text>
</comment>
<comment type="subcellular location">
    <subcellularLocation>
        <location evidence="1 2">Mitochondrion</location>
    </subcellularLocation>
</comment>
<comment type="similarity">
    <text evidence="1">Belongs to the KAE1 / TsaD family.</text>
</comment>
<sequence>MLCLVYNSILCKQRRISLKVLQQFRCWNISKTFLSYRTLTALAIETSCDDTSVSVVRTSDSSSHCQNEIICLNTHRTISKYEAYGGIHPTIVIHEHQKNLAKVIQRTISDAARSGITDFDLIAVTRGPGMIGPLAVGLNTAKGLAVGLQKPLLAVHHMQAHALAVQLEKSIDFPYLNILVSGGHTMLVYSNSLLNHEIIVTTSDIAVGDYLDKCAKYLGIPWDNEMPAAALEQFASPEINSTSYSLKPPIPLNTREKVHSASFSFSGLESYACRIIRKTPLNLSEKKFFAYQLQYAAFQHICQKTLLALKRLDLSKVKYLVCSGGVARNELLKKMLNDTLMVLQFEHQPTDIKLVYPSPDICSDNAAMIGYTAIQMFKAGYTSSFDVEPIRKWPINQILTVEGWLTKKNKKV</sequence>
<proteinExistence type="inferred from homology"/>
<gene>
    <name type="primary">pgp1</name>
    <name type="ORF">SPCC1259.10</name>
</gene>
<organism>
    <name type="scientific">Schizosaccharomyces pombe (strain 972 / ATCC 24843)</name>
    <name type="common">Fission yeast</name>
    <dbReference type="NCBI Taxonomy" id="284812"/>
    <lineage>
        <taxon>Eukaryota</taxon>
        <taxon>Fungi</taxon>
        <taxon>Dikarya</taxon>
        <taxon>Ascomycota</taxon>
        <taxon>Taphrinomycotina</taxon>
        <taxon>Schizosaccharomycetes</taxon>
        <taxon>Schizosaccharomycetales</taxon>
        <taxon>Schizosaccharomycetaceae</taxon>
        <taxon>Schizosaccharomyces</taxon>
    </lineage>
</organism>
<dbReference type="EC" id="2.3.1.234" evidence="1"/>
<dbReference type="EMBL" id="CU329672">
    <property type="protein sequence ID" value="CAA22548.1"/>
    <property type="molecule type" value="Genomic_DNA"/>
</dbReference>
<dbReference type="PIR" id="T40899">
    <property type="entry name" value="T40899"/>
</dbReference>
<dbReference type="RefSeq" id="NP_588066.1">
    <property type="nucleotide sequence ID" value="NM_001023058.2"/>
</dbReference>
<dbReference type="SMR" id="O94710"/>
<dbReference type="BioGRID" id="275646">
    <property type="interactions" value="4"/>
</dbReference>
<dbReference type="FunCoup" id="O94710">
    <property type="interactions" value="429"/>
</dbReference>
<dbReference type="STRING" id="284812.O94710"/>
<dbReference type="iPTMnet" id="O94710"/>
<dbReference type="SwissPalm" id="O94710"/>
<dbReference type="PaxDb" id="4896-SPCC1259.10.1"/>
<dbReference type="EnsemblFungi" id="SPCC1259.10.1">
    <property type="protein sequence ID" value="SPCC1259.10.1:pep"/>
    <property type="gene ID" value="SPCC1259.10"/>
</dbReference>
<dbReference type="GeneID" id="2539074"/>
<dbReference type="KEGG" id="spo:2539074"/>
<dbReference type="PomBase" id="SPCC1259.10">
    <property type="gene designation" value="pgp1"/>
</dbReference>
<dbReference type="VEuPathDB" id="FungiDB:SPCC1259.10"/>
<dbReference type="eggNOG" id="KOG2707">
    <property type="taxonomic scope" value="Eukaryota"/>
</dbReference>
<dbReference type="HOGENOM" id="CLU_023208_4_1_1"/>
<dbReference type="InParanoid" id="O94710"/>
<dbReference type="OMA" id="NAAMIGC"/>
<dbReference type="PhylomeDB" id="O94710"/>
<dbReference type="PRO" id="PR:O94710"/>
<dbReference type="Proteomes" id="UP000002485">
    <property type="component" value="Chromosome III"/>
</dbReference>
<dbReference type="GO" id="GO:0005739">
    <property type="term" value="C:mitochondrion"/>
    <property type="evidence" value="ECO:0007005"/>
    <property type="project" value="PomBase"/>
</dbReference>
<dbReference type="GO" id="GO:0061711">
    <property type="term" value="F:N(6)-L-threonylcarbamoyladenine synthase activity"/>
    <property type="evidence" value="ECO:0000266"/>
    <property type="project" value="PomBase"/>
</dbReference>
<dbReference type="GO" id="GO:0008270">
    <property type="term" value="F:zinc ion binding"/>
    <property type="evidence" value="ECO:0000255"/>
    <property type="project" value="PomBase"/>
</dbReference>
<dbReference type="GO" id="GO:0072670">
    <property type="term" value="P:mitochondrial tRNA threonylcarbamoyladenosine modification"/>
    <property type="evidence" value="ECO:0000318"/>
    <property type="project" value="GO_Central"/>
</dbReference>
<dbReference type="CDD" id="cd24134">
    <property type="entry name" value="ASKHA_NBD_OSGEPL1_QRI7_euk"/>
    <property type="match status" value="1"/>
</dbReference>
<dbReference type="FunFam" id="3.30.420.40:FF:000562">
    <property type="entry name" value="tRNA N6-adenosine threonylcarbamoyltransferase, mitochondrial"/>
    <property type="match status" value="1"/>
</dbReference>
<dbReference type="Gene3D" id="3.30.420.40">
    <property type="match status" value="2"/>
</dbReference>
<dbReference type="HAMAP" id="MF_01445">
    <property type="entry name" value="TsaD"/>
    <property type="match status" value="1"/>
</dbReference>
<dbReference type="InterPro" id="IPR043129">
    <property type="entry name" value="ATPase_NBD"/>
</dbReference>
<dbReference type="InterPro" id="IPR000905">
    <property type="entry name" value="Gcp-like_dom"/>
</dbReference>
<dbReference type="InterPro" id="IPR017861">
    <property type="entry name" value="KAE1/TsaD"/>
</dbReference>
<dbReference type="InterPro" id="IPR017860">
    <property type="entry name" value="Peptidase_M22_CS"/>
</dbReference>
<dbReference type="InterPro" id="IPR022450">
    <property type="entry name" value="TsaD"/>
</dbReference>
<dbReference type="NCBIfam" id="TIGR00329">
    <property type="entry name" value="gcp_kae1"/>
    <property type="match status" value="1"/>
</dbReference>
<dbReference type="PANTHER" id="PTHR11735">
    <property type="entry name" value="TRNA N6-ADENOSINE THREONYLCARBAMOYLTRANSFERASE"/>
    <property type="match status" value="1"/>
</dbReference>
<dbReference type="PANTHER" id="PTHR11735:SF6">
    <property type="entry name" value="TRNA N6-ADENOSINE THREONYLCARBAMOYLTRANSFERASE, MITOCHONDRIAL"/>
    <property type="match status" value="1"/>
</dbReference>
<dbReference type="Pfam" id="PF00814">
    <property type="entry name" value="TsaD"/>
    <property type="match status" value="1"/>
</dbReference>
<dbReference type="PRINTS" id="PR00789">
    <property type="entry name" value="OSIALOPTASE"/>
</dbReference>
<dbReference type="SUPFAM" id="SSF53067">
    <property type="entry name" value="Actin-like ATPase domain"/>
    <property type="match status" value="1"/>
</dbReference>
<dbReference type="PROSITE" id="PS01016">
    <property type="entry name" value="GLYCOPROTEASE"/>
    <property type="match status" value="1"/>
</dbReference>
<keyword id="KW-0012">Acyltransferase</keyword>
<keyword id="KW-0479">Metal-binding</keyword>
<keyword id="KW-0496">Mitochondrion</keyword>
<keyword id="KW-1185">Reference proteome</keyword>
<keyword id="KW-0808">Transferase</keyword>
<keyword id="KW-0809">Transit peptide</keyword>
<keyword id="KW-0819">tRNA processing</keyword>
<feature type="transit peptide" description="Mitochondrion" evidence="1">
    <location>
        <begin position="1"/>
        <end position="78"/>
    </location>
</feature>
<feature type="chain" id="PRO_0000255599" description="tRNA N6-adenosine threonylcarbamoyltransferase, mitochondrial">
    <location>
        <begin position="79"/>
        <end position="412"/>
    </location>
</feature>
<feature type="binding site" evidence="1">
    <location>
        <position position="157"/>
    </location>
    <ligand>
        <name>a divalent metal cation</name>
        <dbReference type="ChEBI" id="CHEBI:60240"/>
    </ligand>
</feature>
<feature type="binding site" evidence="1">
    <location>
        <position position="161"/>
    </location>
    <ligand>
        <name>a divalent metal cation</name>
        <dbReference type="ChEBI" id="CHEBI:60240"/>
    </ligand>
</feature>
<feature type="binding site" evidence="1">
    <location>
        <begin position="179"/>
        <end position="183"/>
    </location>
    <ligand>
        <name>substrate</name>
    </ligand>
</feature>
<feature type="binding site" evidence="1">
    <location>
        <position position="212"/>
    </location>
    <ligand>
        <name>substrate</name>
    </ligand>
</feature>
<feature type="binding site" evidence="1">
    <location>
        <position position="228"/>
    </location>
    <ligand>
        <name>substrate</name>
    </ligand>
</feature>
<feature type="binding site" evidence="1">
    <location>
        <position position="232"/>
    </location>
    <ligand>
        <name>substrate</name>
    </ligand>
</feature>
<feature type="binding site" evidence="1">
    <location>
        <begin position="328"/>
        <end position="329"/>
    </location>
    <ligand>
        <name>substrate</name>
    </ligand>
</feature>
<feature type="binding site" evidence="1">
    <location>
        <position position="363"/>
    </location>
    <ligand>
        <name>substrate</name>
    </ligand>
</feature>
<feature type="binding site" evidence="1">
    <location>
        <position position="364"/>
    </location>
    <ligand>
        <name>a divalent metal cation</name>
        <dbReference type="ChEBI" id="CHEBI:60240"/>
    </ligand>
</feature>
<protein>
    <recommendedName>
        <fullName evidence="1">tRNA N6-adenosine threonylcarbamoyltransferase, mitochondrial</fullName>
        <ecNumber evidence="1">2.3.1.234</ecNumber>
    </recommendedName>
    <alternativeName>
        <fullName evidence="1">N6-L-threonylcarbamoyladenine synthase</fullName>
        <shortName evidence="1">t(6)A synthase</shortName>
    </alternativeName>
    <alternativeName>
        <fullName>Pombe glycoprotease 1</fullName>
    </alternativeName>
    <alternativeName>
        <fullName evidence="1">t(6)A37 threonylcarbamoyladenosine biosynthesis protein pgp1</fullName>
    </alternativeName>
    <alternativeName>
        <fullName evidence="1">tRNA threonylcarbamoyladenosine biosynthesis protein pgp1</fullName>
    </alternativeName>
</protein>
<name>QRI7_SCHPO</name>
<accession>O94710</accession>